<keyword id="KW-0963">Cytoplasm</keyword>
<keyword id="KW-0235">DNA replication</keyword>
<keyword id="KW-0238">DNA-binding</keyword>
<dbReference type="EMBL" id="CP000720">
    <property type="protein sequence ID" value="ABS47927.1"/>
    <property type="molecule type" value="Genomic_DNA"/>
</dbReference>
<dbReference type="RefSeq" id="WP_012105083.1">
    <property type="nucleotide sequence ID" value="NC_009708.1"/>
</dbReference>
<dbReference type="SMR" id="A7FHW9"/>
<dbReference type="KEGG" id="ypi:YpsIP31758_1872"/>
<dbReference type="HOGENOM" id="CLU_078181_0_0_6"/>
<dbReference type="Proteomes" id="UP000002412">
    <property type="component" value="Chromosome"/>
</dbReference>
<dbReference type="GO" id="GO:0005737">
    <property type="term" value="C:cytoplasm"/>
    <property type="evidence" value="ECO:0007669"/>
    <property type="project" value="UniProtKB-SubCell"/>
</dbReference>
<dbReference type="GO" id="GO:0003677">
    <property type="term" value="F:DNA binding"/>
    <property type="evidence" value="ECO:0007669"/>
    <property type="project" value="UniProtKB-UniRule"/>
</dbReference>
<dbReference type="GO" id="GO:0006274">
    <property type="term" value="P:DNA replication termination"/>
    <property type="evidence" value="ECO:0007669"/>
    <property type="project" value="UniProtKB-UniRule"/>
</dbReference>
<dbReference type="Gene3D" id="3.30.54.10">
    <property type="match status" value="1"/>
</dbReference>
<dbReference type="Gene3D" id="3.50.14.10">
    <property type="entry name" value="Replication terminator Tus, domain 1 superfamily/Replication terminator Tus"/>
    <property type="match status" value="1"/>
</dbReference>
<dbReference type="HAMAP" id="MF_00483">
    <property type="entry name" value="Rep_term_Tus"/>
    <property type="match status" value="1"/>
</dbReference>
<dbReference type="InterPro" id="IPR008865">
    <property type="entry name" value="DNA_replication_term_site-bd"/>
</dbReference>
<dbReference type="InterPro" id="IPR036381">
    <property type="entry name" value="Tus_dom1"/>
</dbReference>
<dbReference type="InterPro" id="IPR036384">
    <property type="entry name" value="Tus_sf"/>
</dbReference>
<dbReference type="NCBIfam" id="TIGR02648">
    <property type="entry name" value="rep_term_tus"/>
    <property type="match status" value="1"/>
</dbReference>
<dbReference type="Pfam" id="PF05472">
    <property type="entry name" value="Ter"/>
    <property type="match status" value="1"/>
</dbReference>
<dbReference type="SUPFAM" id="SSF56596">
    <property type="entry name" value="Replication terminator protein (Tus)"/>
    <property type="match status" value="1"/>
</dbReference>
<proteinExistence type="inferred from homology"/>
<accession>A7FHW9</accession>
<organism>
    <name type="scientific">Yersinia pseudotuberculosis serotype O:1b (strain IP 31758)</name>
    <dbReference type="NCBI Taxonomy" id="349747"/>
    <lineage>
        <taxon>Bacteria</taxon>
        <taxon>Pseudomonadati</taxon>
        <taxon>Pseudomonadota</taxon>
        <taxon>Gammaproteobacteria</taxon>
        <taxon>Enterobacterales</taxon>
        <taxon>Yersiniaceae</taxon>
        <taxon>Yersinia</taxon>
    </lineage>
</organism>
<evidence type="ECO:0000255" key="1">
    <source>
        <dbReference type="HAMAP-Rule" id="MF_00483"/>
    </source>
</evidence>
<gene>
    <name evidence="1" type="primary">tus</name>
    <name type="ordered locus">YpsIP31758_1872</name>
</gene>
<feature type="chain" id="PRO_1000060428" description="DNA replication terminus site-binding protein">
    <location>
        <begin position="1"/>
        <end position="311"/>
    </location>
</feature>
<sequence>MNKYDLIERMNTRFAELEVTLHQLHQQLDDLPLIAARVFSLPEIEKGTEHQPIEQITVNITEGEHAKKLGLQHFQRLFLHHQGQHVSSKAALRLPGVLCFSVTDKELIECQDIIKKTNQLKAELEHIITVESGLPSEQRFEFVHTHLHGLITLNTYRTITPLINPSSVRFGWANKHIIKNVTREDILLQLEKSLNAGRAVPPFTREQWRELISLEINDVQRLPEKTRLKIKRPVKVQPIARVWYQEQQKQVQHPCPMPLIAFCQRQSGAELPKLGELTDYDVKHIKHKYKPDAKPLRLLVPRLHLYVELEP</sequence>
<reference key="1">
    <citation type="journal article" date="2007" name="PLoS Genet.">
        <title>The complete genome sequence of Yersinia pseudotuberculosis IP31758, the causative agent of Far East scarlet-like fever.</title>
        <authorList>
            <person name="Eppinger M."/>
            <person name="Rosovitz M.J."/>
            <person name="Fricke W.F."/>
            <person name="Rasko D.A."/>
            <person name="Kokorina G."/>
            <person name="Fayolle C."/>
            <person name="Lindler L.E."/>
            <person name="Carniel E."/>
            <person name="Ravel J."/>
        </authorList>
    </citation>
    <scope>NUCLEOTIDE SEQUENCE [LARGE SCALE GENOMIC DNA]</scope>
    <source>
        <strain>IP 31758</strain>
    </source>
</reference>
<protein>
    <recommendedName>
        <fullName evidence="1">DNA replication terminus site-binding protein</fullName>
        <shortName evidence="1">Ter-binding protein</shortName>
    </recommendedName>
</protein>
<comment type="function">
    <text evidence="1">Trans-acting protein required for termination of DNA replication. Binds to DNA replication terminator sequences (terA to terF) to prevent the passage of replication forks. The termination efficiency will be affected by the affinity of this protein for the terminator sequence.</text>
</comment>
<comment type="subcellular location">
    <subcellularLocation>
        <location evidence="1">Cytoplasm</location>
    </subcellularLocation>
</comment>
<comment type="similarity">
    <text evidence="1">Belongs to the Tus family.</text>
</comment>
<name>TUS_YERP3</name>